<feature type="chain" id="PRO_0000169529" description="Uncharacterized protein YhfT">
    <location>
        <begin position="1"/>
        <end position="434"/>
    </location>
</feature>
<feature type="transmembrane region" description="Helical" evidence="1">
    <location>
        <begin position="50"/>
        <end position="70"/>
    </location>
</feature>
<feature type="transmembrane region" description="Helical" evidence="1">
    <location>
        <begin position="72"/>
        <end position="92"/>
    </location>
</feature>
<feature type="transmembrane region" description="Helical" evidence="1">
    <location>
        <begin position="95"/>
        <end position="115"/>
    </location>
</feature>
<feature type="transmembrane region" description="Helical" evidence="1">
    <location>
        <begin position="135"/>
        <end position="155"/>
    </location>
</feature>
<feature type="transmembrane region" description="Helical" evidence="1">
    <location>
        <begin position="158"/>
        <end position="178"/>
    </location>
</feature>
<feature type="transmembrane region" description="Helical" evidence="1">
    <location>
        <begin position="179"/>
        <end position="199"/>
    </location>
</feature>
<feature type="transmembrane region" description="Helical" evidence="1">
    <location>
        <begin position="229"/>
        <end position="249"/>
    </location>
</feature>
<feature type="transmembrane region" description="Helical" evidence="1">
    <location>
        <begin position="288"/>
        <end position="308"/>
    </location>
</feature>
<feature type="transmembrane region" description="Helical" evidence="1">
    <location>
        <begin position="319"/>
        <end position="339"/>
    </location>
</feature>
<feature type="transmembrane region" description="Helical" evidence="1">
    <location>
        <begin position="376"/>
        <end position="396"/>
    </location>
</feature>
<feature type="transmembrane region" description="Helical" evidence="1">
    <location>
        <begin position="412"/>
        <end position="432"/>
    </location>
</feature>
<sequence length="434" mass="46516">MDLYIQIIVVACLTGMTSLLAHRSAAVFHDGIRPILPQLIEGYMNRREAGSIAFGLSIGFVASVGISFTLKTGLLNAWLLFLPTDILGVLAINSLMAFGLGAIWGVLILTCLLPVNQLLTALPVDVLGSLGELSSPVVSAFALFPLVAIFYQFGWKQSLIAAVVVLMTRVVVVRYFPHLNPESIEIFIGMVMLLGIAITHDLRHRDENDIDASGLSVFEERTSRIIKNLPYIAIVGALIAAVASMKIFAGSEVSIFTLEKAYSAGVTPEQSQTLINQAALAEFMRGLGFVPLIATTALATGVYAVAGFTFVYAVDYLSPNPMVAAVLGAVVISAEVLLLRSIGKWLGRYPSVRNASDNIRNAMNMLMEVALLVGSIFAAIKMAGYTGFSIAVAIYFLNESLGRPVQKMAAPVVAVMITGILLNVLYWLGLFVPA</sequence>
<evidence type="ECO:0000255" key="1"/>
<evidence type="ECO:0000305" key="2"/>
<dbReference type="EMBL" id="U18997">
    <property type="protein sequence ID" value="AAA58174.1"/>
    <property type="status" value="ALT_FRAME"/>
    <property type="molecule type" value="Genomic_DNA"/>
</dbReference>
<dbReference type="EMBL" id="U00096">
    <property type="protein sequence ID" value="AAC76402.1"/>
    <property type="molecule type" value="Genomic_DNA"/>
</dbReference>
<dbReference type="EMBL" id="AP009048">
    <property type="protein sequence ID" value="BAE77914.1"/>
    <property type="molecule type" value="Genomic_DNA"/>
</dbReference>
<dbReference type="PIR" id="D65132">
    <property type="entry name" value="D65132"/>
</dbReference>
<dbReference type="RefSeq" id="NP_417836.1">
    <property type="nucleotide sequence ID" value="NC_000913.3"/>
</dbReference>
<dbReference type="RefSeq" id="WP_000366857.1">
    <property type="nucleotide sequence ID" value="NZ_JACEFS010000013.1"/>
</dbReference>
<dbReference type="BioGRID" id="4263378">
    <property type="interactions" value="977"/>
</dbReference>
<dbReference type="DIP" id="DIP-12329N"/>
<dbReference type="FunCoup" id="P45546">
    <property type="interactions" value="83"/>
</dbReference>
<dbReference type="IntAct" id="P45546">
    <property type="interactions" value="1"/>
</dbReference>
<dbReference type="STRING" id="511145.b3377"/>
<dbReference type="TCDB" id="9.B.118.1.1">
    <property type="family name" value="the 11 or 12 tms yhft (yhft) family"/>
</dbReference>
<dbReference type="PaxDb" id="511145-b3377"/>
<dbReference type="EnsemblBacteria" id="AAC76402">
    <property type="protein sequence ID" value="AAC76402"/>
    <property type="gene ID" value="b3377"/>
</dbReference>
<dbReference type="GeneID" id="947883"/>
<dbReference type="KEGG" id="ecj:JW3340"/>
<dbReference type="KEGG" id="eco:b3377"/>
<dbReference type="KEGG" id="ecoc:C3026_18330"/>
<dbReference type="PATRIC" id="fig|1411691.4.peg.3353"/>
<dbReference type="EchoBASE" id="EB2751"/>
<dbReference type="eggNOG" id="ENOG502Z8E9">
    <property type="taxonomic scope" value="Bacteria"/>
</dbReference>
<dbReference type="HOGENOM" id="CLU_051800_0_0_6"/>
<dbReference type="InParanoid" id="P45546"/>
<dbReference type="OMA" id="MGEHIRT"/>
<dbReference type="OrthoDB" id="92225at2"/>
<dbReference type="BioCyc" id="EcoCyc:G7729-MONOMER"/>
<dbReference type="PRO" id="PR:P45546"/>
<dbReference type="Proteomes" id="UP000000625">
    <property type="component" value="Chromosome"/>
</dbReference>
<dbReference type="GO" id="GO:0005886">
    <property type="term" value="C:plasma membrane"/>
    <property type="evidence" value="ECO:0000314"/>
    <property type="project" value="EcoCyc"/>
</dbReference>
<dbReference type="InterPro" id="IPR019733">
    <property type="entry name" value="Uncharacterised_YhfT"/>
</dbReference>
<dbReference type="Pfam" id="PF10797">
    <property type="entry name" value="YhfT"/>
    <property type="match status" value="1"/>
</dbReference>
<accession>P45546</accession>
<accession>Q2M742</accession>
<organism>
    <name type="scientific">Escherichia coli (strain K12)</name>
    <dbReference type="NCBI Taxonomy" id="83333"/>
    <lineage>
        <taxon>Bacteria</taxon>
        <taxon>Pseudomonadati</taxon>
        <taxon>Pseudomonadota</taxon>
        <taxon>Gammaproteobacteria</taxon>
        <taxon>Enterobacterales</taxon>
        <taxon>Enterobacteriaceae</taxon>
        <taxon>Escherichia</taxon>
    </lineage>
</organism>
<name>YHFT_ECOLI</name>
<reference key="1">
    <citation type="journal article" date="1997" name="Science">
        <title>The complete genome sequence of Escherichia coli K-12.</title>
        <authorList>
            <person name="Blattner F.R."/>
            <person name="Plunkett G. III"/>
            <person name="Bloch C.A."/>
            <person name="Perna N.T."/>
            <person name="Burland V."/>
            <person name="Riley M."/>
            <person name="Collado-Vides J."/>
            <person name="Glasner J.D."/>
            <person name="Rode C.K."/>
            <person name="Mayhew G.F."/>
            <person name="Gregor J."/>
            <person name="Davis N.W."/>
            <person name="Kirkpatrick H.A."/>
            <person name="Goeden M.A."/>
            <person name="Rose D.J."/>
            <person name="Mau B."/>
            <person name="Shao Y."/>
        </authorList>
    </citation>
    <scope>NUCLEOTIDE SEQUENCE [LARGE SCALE GENOMIC DNA]</scope>
    <source>
        <strain>K12 / MG1655 / ATCC 47076</strain>
    </source>
</reference>
<reference key="2">
    <citation type="journal article" date="2006" name="Mol. Syst. Biol.">
        <title>Highly accurate genome sequences of Escherichia coli K-12 strains MG1655 and W3110.</title>
        <authorList>
            <person name="Hayashi K."/>
            <person name="Morooka N."/>
            <person name="Yamamoto Y."/>
            <person name="Fujita K."/>
            <person name="Isono K."/>
            <person name="Choi S."/>
            <person name="Ohtsubo E."/>
            <person name="Baba T."/>
            <person name="Wanner B.L."/>
            <person name="Mori H."/>
            <person name="Horiuchi T."/>
        </authorList>
    </citation>
    <scope>NUCLEOTIDE SEQUENCE [LARGE SCALE GENOMIC DNA]</scope>
    <source>
        <strain>K12 / W3110 / ATCC 27325 / DSM 5911</strain>
    </source>
</reference>
<keyword id="KW-1003">Cell membrane</keyword>
<keyword id="KW-0472">Membrane</keyword>
<keyword id="KW-1185">Reference proteome</keyword>
<keyword id="KW-0812">Transmembrane</keyword>
<keyword id="KW-1133">Transmembrane helix</keyword>
<comment type="subcellular location">
    <subcellularLocation>
        <location evidence="2">Cell membrane</location>
        <topology evidence="2">Multi-pass membrane protein</topology>
    </subcellularLocation>
</comment>
<protein>
    <recommendedName>
        <fullName>Uncharacterized protein YhfT</fullName>
    </recommendedName>
</protein>
<gene>
    <name type="primary">yhfT</name>
    <name type="ordered locus">b3377</name>
    <name type="ordered locus">JW3340</name>
</gene>
<proteinExistence type="predicted"/>